<feature type="chain" id="PRO_0000256308" description="Chorismate synthase">
    <location>
        <begin position="1"/>
        <end position="356"/>
    </location>
</feature>
<feature type="binding site" evidence="1">
    <location>
        <position position="48"/>
    </location>
    <ligand>
        <name>NADP(+)</name>
        <dbReference type="ChEBI" id="CHEBI:58349"/>
    </ligand>
</feature>
<feature type="binding site" evidence="1">
    <location>
        <position position="54"/>
    </location>
    <ligand>
        <name>NADP(+)</name>
        <dbReference type="ChEBI" id="CHEBI:58349"/>
    </ligand>
</feature>
<feature type="binding site" evidence="1">
    <location>
        <begin position="125"/>
        <end position="127"/>
    </location>
    <ligand>
        <name>FMN</name>
        <dbReference type="ChEBI" id="CHEBI:58210"/>
    </ligand>
</feature>
<feature type="binding site" evidence="1">
    <location>
        <begin position="237"/>
        <end position="238"/>
    </location>
    <ligand>
        <name>FMN</name>
        <dbReference type="ChEBI" id="CHEBI:58210"/>
    </ligand>
</feature>
<feature type="binding site" evidence="1">
    <location>
        <position position="281"/>
    </location>
    <ligand>
        <name>FMN</name>
        <dbReference type="ChEBI" id="CHEBI:58210"/>
    </ligand>
</feature>
<feature type="binding site" evidence="1">
    <location>
        <begin position="296"/>
        <end position="300"/>
    </location>
    <ligand>
        <name>FMN</name>
        <dbReference type="ChEBI" id="CHEBI:58210"/>
    </ligand>
</feature>
<feature type="binding site" evidence="1">
    <location>
        <position position="322"/>
    </location>
    <ligand>
        <name>FMN</name>
        <dbReference type="ChEBI" id="CHEBI:58210"/>
    </ligand>
</feature>
<evidence type="ECO:0000255" key="1">
    <source>
        <dbReference type="HAMAP-Rule" id="MF_00300"/>
    </source>
</evidence>
<accession>Q2GCF2</accession>
<proteinExistence type="inferred from homology"/>
<sequence length="356" mass="37657">MSLNSFGHIFRFTTWGESHGPALGAVVDGCPPGLALTEAQIQPFLDARRPGQSRFTTQRQEPDQVRILSGVFEGRTTGTPISLMIENVDQRSKDYGDVAKAYRPGHADYAYDAKYGFRDYRGGGRSSARETAARVAAGAVARLVIPEVSILAWVSEIGGDRIDMDHFDAAEIARNPFFCPDSWAAARWEKLVDDARKSGSSLGAVVECVATGVPAGWGAPLYAKLDAELAHAMMGINAVKGVEIGDGFAAARNTGEGNADPMRPGAGVPEFLANHAGGIAGGISTGQPVTVRVAFKPTSSILTPMPTITREGEATELLTKGRHDPCVGIRGVPVVEAMMALVLADQKLLHRGQCGG</sequence>
<gene>
    <name evidence="1" type="primary">aroC</name>
    <name type="ordered locus">Saro_0009</name>
</gene>
<protein>
    <recommendedName>
        <fullName evidence="1">Chorismate synthase</fullName>
        <shortName evidence="1">CS</shortName>
        <ecNumber evidence="1">4.2.3.5</ecNumber>
    </recommendedName>
    <alternativeName>
        <fullName evidence="1">5-enolpyruvylshikimate-3-phosphate phospholyase</fullName>
    </alternativeName>
</protein>
<organism>
    <name type="scientific">Novosphingobium aromaticivorans (strain ATCC 700278 / DSM 12444 / CCUG 56034 / CIP 105152 / NBRC 16084 / F199)</name>
    <dbReference type="NCBI Taxonomy" id="279238"/>
    <lineage>
        <taxon>Bacteria</taxon>
        <taxon>Pseudomonadati</taxon>
        <taxon>Pseudomonadota</taxon>
        <taxon>Alphaproteobacteria</taxon>
        <taxon>Sphingomonadales</taxon>
        <taxon>Sphingomonadaceae</taxon>
        <taxon>Novosphingobium</taxon>
    </lineage>
</organism>
<comment type="function">
    <text evidence="1">Catalyzes the anti-1,4-elimination of the C-3 phosphate and the C-6 proR hydrogen from 5-enolpyruvylshikimate-3-phosphate (EPSP) to yield chorismate, which is the branch point compound that serves as the starting substrate for the three terminal pathways of aromatic amino acid biosynthesis. This reaction introduces a second double bond into the aromatic ring system.</text>
</comment>
<comment type="catalytic activity">
    <reaction evidence="1">
        <text>5-O-(1-carboxyvinyl)-3-phosphoshikimate = chorismate + phosphate</text>
        <dbReference type="Rhea" id="RHEA:21020"/>
        <dbReference type="ChEBI" id="CHEBI:29748"/>
        <dbReference type="ChEBI" id="CHEBI:43474"/>
        <dbReference type="ChEBI" id="CHEBI:57701"/>
        <dbReference type="EC" id="4.2.3.5"/>
    </reaction>
</comment>
<comment type="cofactor">
    <cofactor evidence="1">
        <name>FMNH2</name>
        <dbReference type="ChEBI" id="CHEBI:57618"/>
    </cofactor>
    <text evidence="1">Reduced FMN (FMNH(2)).</text>
</comment>
<comment type="pathway">
    <text evidence="1">Metabolic intermediate biosynthesis; chorismate biosynthesis; chorismate from D-erythrose 4-phosphate and phosphoenolpyruvate: step 7/7.</text>
</comment>
<comment type="subunit">
    <text evidence="1">Homotetramer.</text>
</comment>
<comment type="similarity">
    <text evidence="1">Belongs to the chorismate synthase family.</text>
</comment>
<name>AROC_NOVAD</name>
<dbReference type="EC" id="4.2.3.5" evidence="1"/>
<dbReference type="EMBL" id="CP000248">
    <property type="protein sequence ID" value="ABD24458.1"/>
    <property type="molecule type" value="Genomic_DNA"/>
</dbReference>
<dbReference type="RefSeq" id="WP_011443672.1">
    <property type="nucleotide sequence ID" value="NC_007794.1"/>
</dbReference>
<dbReference type="SMR" id="Q2GCF2"/>
<dbReference type="STRING" id="279238.Saro_0009"/>
<dbReference type="KEGG" id="nar:Saro_0009"/>
<dbReference type="eggNOG" id="COG0082">
    <property type="taxonomic scope" value="Bacteria"/>
</dbReference>
<dbReference type="HOGENOM" id="CLU_034547_0_0_5"/>
<dbReference type="UniPathway" id="UPA00053">
    <property type="reaction ID" value="UER00090"/>
</dbReference>
<dbReference type="Proteomes" id="UP000009134">
    <property type="component" value="Chromosome"/>
</dbReference>
<dbReference type="GO" id="GO:0005829">
    <property type="term" value="C:cytosol"/>
    <property type="evidence" value="ECO:0007669"/>
    <property type="project" value="TreeGrafter"/>
</dbReference>
<dbReference type="GO" id="GO:0004107">
    <property type="term" value="F:chorismate synthase activity"/>
    <property type="evidence" value="ECO:0007669"/>
    <property type="project" value="UniProtKB-UniRule"/>
</dbReference>
<dbReference type="GO" id="GO:0010181">
    <property type="term" value="F:FMN binding"/>
    <property type="evidence" value="ECO:0007669"/>
    <property type="project" value="TreeGrafter"/>
</dbReference>
<dbReference type="GO" id="GO:0008652">
    <property type="term" value="P:amino acid biosynthetic process"/>
    <property type="evidence" value="ECO:0007669"/>
    <property type="project" value="UniProtKB-KW"/>
</dbReference>
<dbReference type="GO" id="GO:0009073">
    <property type="term" value="P:aromatic amino acid family biosynthetic process"/>
    <property type="evidence" value="ECO:0007669"/>
    <property type="project" value="UniProtKB-KW"/>
</dbReference>
<dbReference type="GO" id="GO:0009423">
    <property type="term" value="P:chorismate biosynthetic process"/>
    <property type="evidence" value="ECO:0007669"/>
    <property type="project" value="UniProtKB-UniRule"/>
</dbReference>
<dbReference type="CDD" id="cd07304">
    <property type="entry name" value="Chorismate_synthase"/>
    <property type="match status" value="1"/>
</dbReference>
<dbReference type="Gene3D" id="3.60.150.10">
    <property type="entry name" value="Chorismate synthase AroC"/>
    <property type="match status" value="1"/>
</dbReference>
<dbReference type="HAMAP" id="MF_00300">
    <property type="entry name" value="Chorismate_synth"/>
    <property type="match status" value="1"/>
</dbReference>
<dbReference type="InterPro" id="IPR000453">
    <property type="entry name" value="Chorismate_synth"/>
</dbReference>
<dbReference type="InterPro" id="IPR035904">
    <property type="entry name" value="Chorismate_synth_AroC_sf"/>
</dbReference>
<dbReference type="InterPro" id="IPR020541">
    <property type="entry name" value="Chorismate_synthase_CS"/>
</dbReference>
<dbReference type="NCBIfam" id="TIGR00033">
    <property type="entry name" value="aroC"/>
    <property type="match status" value="1"/>
</dbReference>
<dbReference type="NCBIfam" id="NF003793">
    <property type="entry name" value="PRK05382.1"/>
    <property type="match status" value="1"/>
</dbReference>
<dbReference type="PANTHER" id="PTHR21085">
    <property type="entry name" value="CHORISMATE SYNTHASE"/>
    <property type="match status" value="1"/>
</dbReference>
<dbReference type="PANTHER" id="PTHR21085:SF0">
    <property type="entry name" value="CHORISMATE SYNTHASE"/>
    <property type="match status" value="1"/>
</dbReference>
<dbReference type="Pfam" id="PF01264">
    <property type="entry name" value="Chorismate_synt"/>
    <property type="match status" value="1"/>
</dbReference>
<dbReference type="PIRSF" id="PIRSF001456">
    <property type="entry name" value="Chorismate_synth"/>
    <property type="match status" value="1"/>
</dbReference>
<dbReference type="SUPFAM" id="SSF103263">
    <property type="entry name" value="Chorismate synthase, AroC"/>
    <property type="match status" value="1"/>
</dbReference>
<dbReference type="PROSITE" id="PS00787">
    <property type="entry name" value="CHORISMATE_SYNTHASE_1"/>
    <property type="match status" value="1"/>
</dbReference>
<dbReference type="PROSITE" id="PS00788">
    <property type="entry name" value="CHORISMATE_SYNTHASE_2"/>
    <property type="match status" value="1"/>
</dbReference>
<dbReference type="PROSITE" id="PS00789">
    <property type="entry name" value="CHORISMATE_SYNTHASE_3"/>
    <property type="match status" value="1"/>
</dbReference>
<keyword id="KW-0028">Amino-acid biosynthesis</keyword>
<keyword id="KW-0057">Aromatic amino acid biosynthesis</keyword>
<keyword id="KW-0274">FAD</keyword>
<keyword id="KW-0285">Flavoprotein</keyword>
<keyword id="KW-0288">FMN</keyword>
<keyword id="KW-0456">Lyase</keyword>
<keyword id="KW-0521">NADP</keyword>
<keyword id="KW-1185">Reference proteome</keyword>
<reference key="1">
    <citation type="submission" date="2006-01" db="EMBL/GenBank/DDBJ databases">
        <title>Complete sequence of Novosphingobium aromaticivorans DSM 12444.</title>
        <authorList>
            <consortium name="US DOE Joint Genome Institute"/>
            <person name="Copeland A."/>
            <person name="Lucas S."/>
            <person name="Lapidus A."/>
            <person name="Barry K."/>
            <person name="Detter J.C."/>
            <person name="Glavina T."/>
            <person name="Hammon N."/>
            <person name="Israni S."/>
            <person name="Pitluck S."/>
            <person name="Chain P."/>
            <person name="Malfatti S."/>
            <person name="Shin M."/>
            <person name="Vergez L."/>
            <person name="Schmutz J."/>
            <person name="Larimer F."/>
            <person name="Land M."/>
            <person name="Kyrpides N."/>
            <person name="Ivanova N."/>
            <person name="Fredrickson J."/>
            <person name="Balkwill D."/>
            <person name="Romine M.F."/>
            <person name="Richardson P."/>
        </authorList>
    </citation>
    <scope>NUCLEOTIDE SEQUENCE [LARGE SCALE GENOMIC DNA]</scope>
    <source>
        <strain>ATCC 700278 / DSM 12444 / CCUG 56034 / CIP 105152 / NBRC 16084 / F199</strain>
    </source>
</reference>